<keyword id="KW-1185">Reference proteome</keyword>
<keyword id="KW-0808">Transferase</keyword>
<protein>
    <recommendedName>
        <fullName evidence="3">(4-{4-[2-(gamma-L-glutamylamino)ethyl]phenoxymethyl}furan-2-yl)methanamine synthase</fullName>
        <ecNumber evidence="1">2.5.1.131</ecNumber>
    </recommendedName>
    <alternativeName>
        <fullName evidence="3">4-[[4-(2-aminoethyl)phenoxy]-methyl]-2-furanmethanamine-glutamate synthase</fullName>
        <shortName evidence="3">APMF-Glu synthase</shortName>
    </alternativeName>
</protein>
<accession>Q58250</accession>
<sequence>MKIMILGIDIGGANTKITEIEGDNYKIHHIYFPMWKKKDELEDLLKNYNDNVDYVALVMTAELADCYKTKKEGVEDIIDKVEKAFNCPVYVFDVNGNFLTSEEAKKNYLDVSASNWNATAKFVAEFIKDSCILVDMGSTTTDIIPIKDKEVLAEKTDLDRLMNNQLVYVGTLRTPVSFLANKIEFRGKLTNLSSEYFAITADISLILNKITEEDYTCDTPDGAGKDFESCLTRLVRVLCADREMVKDDELIDFANKLYNKLLELIRENVDTIAKRYNLNDVVITGLGEEILKDALDEYNIISIKETYGKDVSLATPSFAVAKLLQKQLDK</sequence>
<organism>
    <name type="scientific">Methanocaldococcus jannaschii (strain ATCC 43067 / DSM 2661 / JAL-1 / JCM 10045 / NBRC 100440)</name>
    <name type="common">Methanococcus jannaschii</name>
    <dbReference type="NCBI Taxonomy" id="243232"/>
    <lineage>
        <taxon>Archaea</taxon>
        <taxon>Methanobacteriati</taxon>
        <taxon>Methanobacteriota</taxon>
        <taxon>Methanomada group</taxon>
        <taxon>Methanococci</taxon>
        <taxon>Methanococcales</taxon>
        <taxon>Methanocaldococcaceae</taxon>
        <taxon>Methanocaldococcus</taxon>
    </lineage>
</organism>
<name>MFNF_METJA</name>
<comment type="function">
    <text evidence="1">Catalyzes the condensation between 5-(aminomethyl)-3-furanmethanol diphosphate (F1-PP) and gamma-glutamyltyramine to produce APMF-Glu.</text>
</comment>
<comment type="catalytic activity">
    <reaction evidence="1">
        <text>gamma-L-glutamyltyramine + [5-(aminomethyl)furan-3-yl]methyl diphosphate = (4-{4-[2-(gamma-L-glutamylamino)ethyl]phenoxymethyl}furan-2-yl)methanamine + diphosphate</text>
        <dbReference type="Rhea" id="RHEA:47840"/>
        <dbReference type="ChEBI" id="CHEBI:33019"/>
        <dbReference type="ChEBI" id="CHEBI:83425"/>
        <dbReference type="ChEBI" id="CHEBI:88054"/>
        <dbReference type="ChEBI" id="CHEBI:88055"/>
        <dbReference type="EC" id="2.5.1.131"/>
    </reaction>
</comment>
<comment type="pathway">
    <text evidence="4">Cofactor biosynthesis; methanofuran biosynthesis.</text>
</comment>
<comment type="similarity">
    <text evidence="3">Belongs to the MfnF family.</text>
</comment>
<proteinExistence type="evidence at protein level"/>
<dbReference type="EC" id="2.5.1.131" evidence="1"/>
<dbReference type="EMBL" id="L77117">
    <property type="protein sequence ID" value="AAB98845.1"/>
    <property type="molecule type" value="Genomic_DNA"/>
</dbReference>
<dbReference type="PIR" id="H64404">
    <property type="entry name" value="H64404"/>
</dbReference>
<dbReference type="SMR" id="Q58250"/>
<dbReference type="FunCoup" id="Q58250">
    <property type="interactions" value="111"/>
</dbReference>
<dbReference type="STRING" id="243232.MJ_0840"/>
<dbReference type="PaxDb" id="243232-MJ_0840"/>
<dbReference type="EnsemblBacteria" id="AAB98845">
    <property type="protein sequence ID" value="AAB98845"/>
    <property type="gene ID" value="MJ_0840"/>
</dbReference>
<dbReference type="KEGG" id="mja:MJ_0840"/>
<dbReference type="eggNOG" id="arCOG04369">
    <property type="taxonomic scope" value="Archaea"/>
</dbReference>
<dbReference type="HOGENOM" id="CLU_060932_0_0_2"/>
<dbReference type="InParanoid" id="Q58250"/>
<dbReference type="PhylomeDB" id="Q58250"/>
<dbReference type="BioCyc" id="MetaCyc:MONOMER-19568"/>
<dbReference type="BRENDA" id="2.5.1.131">
    <property type="organism ID" value="3260"/>
</dbReference>
<dbReference type="UniPathway" id="UPA00080"/>
<dbReference type="Proteomes" id="UP000000805">
    <property type="component" value="Chromosome"/>
</dbReference>
<dbReference type="GO" id="GO:0016787">
    <property type="term" value="F:hydrolase activity"/>
    <property type="evidence" value="ECO:0007669"/>
    <property type="project" value="InterPro"/>
</dbReference>
<dbReference type="GO" id="GO:0016740">
    <property type="term" value="F:transferase activity"/>
    <property type="evidence" value="ECO:0007669"/>
    <property type="project" value="UniProtKB-KW"/>
</dbReference>
<dbReference type="Gene3D" id="3.30.420.40">
    <property type="match status" value="1"/>
</dbReference>
<dbReference type="Gene3D" id="3.30.420.190">
    <property type="entry name" value="conserved archaeal protein q6m145"/>
    <property type="match status" value="1"/>
</dbReference>
<dbReference type="InterPro" id="IPR043129">
    <property type="entry name" value="ATPase_NBD"/>
</dbReference>
<dbReference type="InterPro" id="IPR002821">
    <property type="entry name" value="Hydantoinase_A"/>
</dbReference>
<dbReference type="InterPro" id="IPR002756">
    <property type="entry name" value="MfnF"/>
</dbReference>
<dbReference type="InterPro" id="IPR053660">
    <property type="entry name" value="MfnF_synthase"/>
</dbReference>
<dbReference type="NCBIfam" id="NF040623">
    <property type="entry name" value="MfnF"/>
    <property type="match status" value="1"/>
</dbReference>
<dbReference type="NCBIfam" id="TIGR03123">
    <property type="entry name" value="one_C_unchar_1"/>
    <property type="match status" value="1"/>
</dbReference>
<dbReference type="Pfam" id="PF01968">
    <property type="entry name" value="Hydantoinase_A"/>
    <property type="match status" value="1"/>
</dbReference>
<dbReference type="SUPFAM" id="SSF53067">
    <property type="entry name" value="Actin-like ATPase domain"/>
    <property type="match status" value="1"/>
</dbReference>
<evidence type="ECO:0000269" key="1">
    <source>
    </source>
</evidence>
<evidence type="ECO:0000303" key="2">
    <source>
    </source>
</evidence>
<evidence type="ECO:0000305" key="3"/>
<evidence type="ECO:0000305" key="4">
    <source>
    </source>
</evidence>
<reference key="1">
    <citation type="journal article" date="1996" name="Science">
        <title>Complete genome sequence of the methanogenic archaeon, Methanococcus jannaschii.</title>
        <authorList>
            <person name="Bult C.J."/>
            <person name="White O."/>
            <person name="Olsen G.J."/>
            <person name="Zhou L."/>
            <person name="Fleischmann R.D."/>
            <person name="Sutton G.G."/>
            <person name="Blake J.A."/>
            <person name="FitzGerald L.M."/>
            <person name="Clayton R.A."/>
            <person name="Gocayne J.D."/>
            <person name="Kerlavage A.R."/>
            <person name="Dougherty B.A."/>
            <person name="Tomb J.-F."/>
            <person name="Adams M.D."/>
            <person name="Reich C.I."/>
            <person name="Overbeek R."/>
            <person name="Kirkness E.F."/>
            <person name="Weinstock K.G."/>
            <person name="Merrick J.M."/>
            <person name="Glodek A."/>
            <person name="Scott J.L."/>
            <person name="Geoghagen N.S.M."/>
            <person name="Weidman J.F."/>
            <person name="Fuhrmann J.L."/>
            <person name="Nguyen D."/>
            <person name="Utterback T.R."/>
            <person name="Kelley J.M."/>
            <person name="Peterson J.D."/>
            <person name="Sadow P.W."/>
            <person name="Hanna M.C."/>
            <person name="Cotton M.D."/>
            <person name="Roberts K.M."/>
            <person name="Hurst M.A."/>
            <person name="Kaine B.P."/>
            <person name="Borodovsky M."/>
            <person name="Klenk H.-P."/>
            <person name="Fraser C.M."/>
            <person name="Smith H.O."/>
            <person name="Woese C.R."/>
            <person name="Venter J.C."/>
        </authorList>
    </citation>
    <scope>NUCLEOTIDE SEQUENCE [LARGE SCALE GENOMIC DNA]</scope>
    <source>
        <strain>ATCC 43067 / DSM 2661 / JAL-1 / JCM 10045 / NBRC 100440</strain>
    </source>
</reference>
<reference key="2">
    <citation type="journal article" date="2015" name="J. Bacteriol.">
        <title>Identification of the final two genes functioning in methanofuran biosynthesis in Methanocaldococcus jannaschii.</title>
        <authorList>
            <person name="Wang Y."/>
            <person name="Xu H."/>
            <person name="Jones M.K."/>
            <person name="White R.H."/>
        </authorList>
    </citation>
    <scope>FUNCTION</scope>
    <scope>CATALYTIC ACTIVITY</scope>
    <scope>PATHWAY</scope>
</reference>
<feature type="chain" id="PRO_0000107076" description="(4-{4-[2-(gamma-L-glutamylamino)ethyl]phenoxymethyl}furan-2-yl)methanamine synthase">
    <location>
        <begin position="1"/>
        <end position="330"/>
    </location>
</feature>
<gene>
    <name evidence="2" type="primary">mfnF</name>
    <name type="ordered locus">MJ0840</name>
</gene>